<sequence length="148" mass="16581">MRTTFLAKPGEIERKWYVVDATDIPLGRLSSVVASILRGKNKPQFTPNVDTGDNVIIINASKLKLTGKKASDKIYYHHSQHPGGLKHEIAGDLLRDNPARLVEYSVKKMLPTKNTLGHQQFLKLHVYAGEEHPHLAQKPEVLDISNLI</sequence>
<name>RL13_LACP3</name>
<reference key="1">
    <citation type="journal article" date="2006" name="Proc. Natl. Acad. Sci. U.S.A.">
        <title>Comparative genomics of the lactic acid bacteria.</title>
        <authorList>
            <person name="Makarova K.S."/>
            <person name="Slesarev A."/>
            <person name="Wolf Y.I."/>
            <person name="Sorokin A."/>
            <person name="Mirkin B."/>
            <person name="Koonin E.V."/>
            <person name="Pavlov A."/>
            <person name="Pavlova N."/>
            <person name="Karamychev V."/>
            <person name="Polouchine N."/>
            <person name="Shakhova V."/>
            <person name="Grigoriev I."/>
            <person name="Lou Y."/>
            <person name="Rohksar D."/>
            <person name="Lucas S."/>
            <person name="Huang K."/>
            <person name="Goodstein D.M."/>
            <person name="Hawkins T."/>
            <person name="Plengvidhya V."/>
            <person name="Welker D."/>
            <person name="Hughes J."/>
            <person name="Goh Y."/>
            <person name="Benson A."/>
            <person name="Baldwin K."/>
            <person name="Lee J.-H."/>
            <person name="Diaz-Muniz I."/>
            <person name="Dosti B."/>
            <person name="Smeianov V."/>
            <person name="Wechter W."/>
            <person name="Barabote R."/>
            <person name="Lorca G."/>
            <person name="Altermann E."/>
            <person name="Barrangou R."/>
            <person name="Ganesan B."/>
            <person name="Xie Y."/>
            <person name="Rawsthorne H."/>
            <person name="Tamir D."/>
            <person name="Parker C."/>
            <person name="Breidt F."/>
            <person name="Broadbent J.R."/>
            <person name="Hutkins R."/>
            <person name="O'Sullivan D."/>
            <person name="Steele J."/>
            <person name="Unlu G."/>
            <person name="Saier M.H. Jr."/>
            <person name="Klaenhammer T."/>
            <person name="Richardson P."/>
            <person name="Kozyavkin S."/>
            <person name="Weimer B.C."/>
            <person name="Mills D.A."/>
        </authorList>
    </citation>
    <scope>NUCLEOTIDE SEQUENCE [LARGE SCALE GENOMIC DNA]</scope>
    <source>
        <strain>ATCC 334 / BCRC 17002 / CCUG 31169 / CIP 107868 / KCTC 3260 / NRRL B-441</strain>
    </source>
</reference>
<proteinExistence type="inferred from homology"/>
<evidence type="ECO:0000255" key="1">
    <source>
        <dbReference type="HAMAP-Rule" id="MF_01366"/>
    </source>
</evidence>
<evidence type="ECO:0000305" key="2"/>
<keyword id="KW-1185">Reference proteome</keyword>
<keyword id="KW-0687">Ribonucleoprotein</keyword>
<keyword id="KW-0689">Ribosomal protein</keyword>
<gene>
    <name evidence="1" type="primary">rplM</name>
    <name type="ordered locus">LSEI_2463</name>
</gene>
<dbReference type="EMBL" id="CP000423">
    <property type="protein sequence ID" value="ABJ71199.1"/>
    <property type="molecule type" value="Genomic_DNA"/>
</dbReference>
<dbReference type="RefSeq" id="WP_003567485.1">
    <property type="nucleotide sequence ID" value="NC_008526.1"/>
</dbReference>
<dbReference type="RefSeq" id="YP_807641.1">
    <property type="nucleotide sequence ID" value="NC_008526.1"/>
</dbReference>
<dbReference type="SMR" id="Q035C3"/>
<dbReference type="STRING" id="321967.LSEI_2463"/>
<dbReference type="PaxDb" id="321967-LSEI_2463"/>
<dbReference type="GeneID" id="57091046"/>
<dbReference type="KEGG" id="lca:LSEI_2463"/>
<dbReference type="PATRIC" id="fig|321967.11.peg.2417"/>
<dbReference type="HOGENOM" id="CLU_082184_2_2_9"/>
<dbReference type="Proteomes" id="UP000001651">
    <property type="component" value="Chromosome"/>
</dbReference>
<dbReference type="GO" id="GO:0022625">
    <property type="term" value="C:cytosolic large ribosomal subunit"/>
    <property type="evidence" value="ECO:0007669"/>
    <property type="project" value="TreeGrafter"/>
</dbReference>
<dbReference type="GO" id="GO:0003729">
    <property type="term" value="F:mRNA binding"/>
    <property type="evidence" value="ECO:0007669"/>
    <property type="project" value="TreeGrafter"/>
</dbReference>
<dbReference type="GO" id="GO:0003735">
    <property type="term" value="F:structural constituent of ribosome"/>
    <property type="evidence" value="ECO:0007669"/>
    <property type="project" value="InterPro"/>
</dbReference>
<dbReference type="GO" id="GO:0017148">
    <property type="term" value="P:negative regulation of translation"/>
    <property type="evidence" value="ECO:0007669"/>
    <property type="project" value="TreeGrafter"/>
</dbReference>
<dbReference type="GO" id="GO:0006412">
    <property type="term" value="P:translation"/>
    <property type="evidence" value="ECO:0007669"/>
    <property type="project" value="UniProtKB-UniRule"/>
</dbReference>
<dbReference type="CDD" id="cd00392">
    <property type="entry name" value="Ribosomal_L13"/>
    <property type="match status" value="1"/>
</dbReference>
<dbReference type="FunFam" id="3.90.1180.10:FF:000001">
    <property type="entry name" value="50S ribosomal protein L13"/>
    <property type="match status" value="1"/>
</dbReference>
<dbReference type="Gene3D" id="3.90.1180.10">
    <property type="entry name" value="Ribosomal protein L13"/>
    <property type="match status" value="1"/>
</dbReference>
<dbReference type="HAMAP" id="MF_01366">
    <property type="entry name" value="Ribosomal_uL13"/>
    <property type="match status" value="1"/>
</dbReference>
<dbReference type="InterPro" id="IPR005822">
    <property type="entry name" value="Ribosomal_uL13"/>
</dbReference>
<dbReference type="InterPro" id="IPR005823">
    <property type="entry name" value="Ribosomal_uL13_bac-type"/>
</dbReference>
<dbReference type="InterPro" id="IPR023563">
    <property type="entry name" value="Ribosomal_uL13_CS"/>
</dbReference>
<dbReference type="InterPro" id="IPR036899">
    <property type="entry name" value="Ribosomal_uL13_sf"/>
</dbReference>
<dbReference type="NCBIfam" id="TIGR01066">
    <property type="entry name" value="rplM_bact"/>
    <property type="match status" value="1"/>
</dbReference>
<dbReference type="PANTHER" id="PTHR11545:SF2">
    <property type="entry name" value="LARGE RIBOSOMAL SUBUNIT PROTEIN UL13M"/>
    <property type="match status" value="1"/>
</dbReference>
<dbReference type="PANTHER" id="PTHR11545">
    <property type="entry name" value="RIBOSOMAL PROTEIN L13"/>
    <property type="match status" value="1"/>
</dbReference>
<dbReference type="Pfam" id="PF00572">
    <property type="entry name" value="Ribosomal_L13"/>
    <property type="match status" value="1"/>
</dbReference>
<dbReference type="PIRSF" id="PIRSF002181">
    <property type="entry name" value="Ribosomal_L13"/>
    <property type="match status" value="1"/>
</dbReference>
<dbReference type="SUPFAM" id="SSF52161">
    <property type="entry name" value="Ribosomal protein L13"/>
    <property type="match status" value="1"/>
</dbReference>
<dbReference type="PROSITE" id="PS00783">
    <property type="entry name" value="RIBOSOMAL_L13"/>
    <property type="match status" value="1"/>
</dbReference>
<accession>Q035C3</accession>
<feature type="chain" id="PRO_1000055398" description="Large ribosomal subunit protein uL13">
    <location>
        <begin position="1"/>
        <end position="148"/>
    </location>
</feature>
<organism>
    <name type="scientific">Lacticaseibacillus paracasei (strain ATCC 334 / BCRC 17002 / CCUG 31169 / CIP 107868 / KCTC 3260 / NRRL B-441)</name>
    <name type="common">Lactobacillus paracasei</name>
    <dbReference type="NCBI Taxonomy" id="321967"/>
    <lineage>
        <taxon>Bacteria</taxon>
        <taxon>Bacillati</taxon>
        <taxon>Bacillota</taxon>
        <taxon>Bacilli</taxon>
        <taxon>Lactobacillales</taxon>
        <taxon>Lactobacillaceae</taxon>
        <taxon>Lacticaseibacillus</taxon>
    </lineage>
</organism>
<protein>
    <recommendedName>
        <fullName evidence="1">Large ribosomal subunit protein uL13</fullName>
    </recommendedName>
    <alternativeName>
        <fullName evidence="2">50S ribosomal protein L13</fullName>
    </alternativeName>
</protein>
<comment type="function">
    <text evidence="1">This protein is one of the early assembly proteins of the 50S ribosomal subunit, although it is not seen to bind rRNA by itself. It is important during the early stages of 50S assembly.</text>
</comment>
<comment type="subunit">
    <text evidence="1">Part of the 50S ribosomal subunit.</text>
</comment>
<comment type="similarity">
    <text evidence="1">Belongs to the universal ribosomal protein uL13 family.</text>
</comment>